<gene>
    <name type="ordered locus">MMAR_0357</name>
</gene>
<accession>B2HLS5</accession>
<evidence type="ECO:0000250" key="1"/>
<evidence type="ECO:0000305" key="2"/>
<feature type="chain" id="PRO_0000361169" description="Putative S-adenosyl-L-methionine-dependent methyltransferase MMAR_0357">
    <location>
        <begin position="1"/>
        <end position="310"/>
    </location>
</feature>
<feature type="binding site" evidence="1">
    <location>
        <position position="132"/>
    </location>
    <ligand>
        <name>S-adenosyl-L-methionine</name>
        <dbReference type="ChEBI" id="CHEBI:59789"/>
    </ligand>
</feature>
<feature type="binding site" evidence="1">
    <location>
        <begin position="161"/>
        <end position="162"/>
    </location>
    <ligand>
        <name>S-adenosyl-L-methionine</name>
        <dbReference type="ChEBI" id="CHEBI:59789"/>
    </ligand>
</feature>
<protein>
    <recommendedName>
        <fullName>Putative S-adenosyl-L-methionine-dependent methyltransferase MMAR_0357</fullName>
        <ecNumber>2.1.1.-</ecNumber>
    </recommendedName>
</protein>
<keyword id="KW-0489">Methyltransferase</keyword>
<keyword id="KW-1185">Reference proteome</keyword>
<keyword id="KW-0949">S-adenosyl-L-methionine</keyword>
<keyword id="KW-0808">Transferase</keyword>
<name>Y357_MYCMM</name>
<proteinExistence type="inferred from homology"/>
<organism>
    <name type="scientific">Mycobacterium marinum (strain ATCC BAA-535 / M)</name>
    <dbReference type="NCBI Taxonomy" id="216594"/>
    <lineage>
        <taxon>Bacteria</taxon>
        <taxon>Bacillati</taxon>
        <taxon>Actinomycetota</taxon>
        <taxon>Actinomycetes</taxon>
        <taxon>Mycobacteriales</taxon>
        <taxon>Mycobacteriaceae</taxon>
        <taxon>Mycobacterium</taxon>
        <taxon>Mycobacterium ulcerans group</taxon>
    </lineage>
</organism>
<comment type="function">
    <text evidence="1">Exhibits S-adenosyl-L-methionine-dependent methyltransferase activity.</text>
</comment>
<comment type="similarity">
    <text evidence="2">Belongs to the UPF0677 family.</text>
</comment>
<comment type="sequence caution" evidence="2">
    <conflict type="erroneous initiation">
        <sequence resource="EMBL-CDS" id="ACC38824"/>
    </conflict>
</comment>
<dbReference type="EC" id="2.1.1.-"/>
<dbReference type="EMBL" id="CP000854">
    <property type="protein sequence ID" value="ACC38824.1"/>
    <property type="status" value="ALT_INIT"/>
    <property type="molecule type" value="Genomic_DNA"/>
</dbReference>
<dbReference type="RefSeq" id="WP_085979856.1">
    <property type="nucleotide sequence ID" value="NC_010612.1"/>
</dbReference>
<dbReference type="SMR" id="B2HLS5"/>
<dbReference type="STRING" id="216594.MMAR_0357"/>
<dbReference type="KEGG" id="mmi:MMAR_0357"/>
<dbReference type="eggNOG" id="COG3315">
    <property type="taxonomic scope" value="Bacteria"/>
</dbReference>
<dbReference type="HOGENOM" id="CLU_056160_2_1_11"/>
<dbReference type="OrthoDB" id="9806164at2"/>
<dbReference type="Proteomes" id="UP000001190">
    <property type="component" value="Chromosome"/>
</dbReference>
<dbReference type="GO" id="GO:0008168">
    <property type="term" value="F:methyltransferase activity"/>
    <property type="evidence" value="ECO:0007669"/>
    <property type="project" value="UniProtKB-KW"/>
</dbReference>
<dbReference type="GO" id="GO:0032259">
    <property type="term" value="P:methylation"/>
    <property type="evidence" value="ECO:0007669"/>
    <property type="project" value="UniProtKB-KW"/>
</dbReference>
<dbReference type="FunFam" id="3.40.50.150:FF:000152">
    <property type="entry name" value="S-adenosyl-L-methionine-dependent methyltransferase"/>
    <property type="match status" value="1"/>
</dbReference>
<dbReference type="Gene3D" id="3.40.50.150">
    <property type="entry name" value="Vaccinia Virus protein VP39"/>
    <property type="match status" value="1"/>
</dbReference>
<dbReference type="InterPro" id="IPR007213">
    <property type="entry name" value="Ppm1/Ppm2/Tcmp"/>
</dbReference>
<dbReference type="InterPro" id="IPR029063">
    <property type="entry name" value="SAM-dependent_MTases_sf"/>
</dbReference>
<dbReference type="InterPro" id="IPR011610">
    <property type="entry name" value="SAM_mthyl_Trfase_ML2640-like"/>
</dbReference>
<dbReference type="NCBIfam" id="TIGR00027">
    <property type="entry name" value="mthyl_TIGR00027"/>
    <property type="match status" value="1"/>
</dbReference>
<dbReference type="PANTHER" id="PTHR43619">
    <property type="entry name" value="S-ADENOSYL-L-METHIONINE-DEPENDENT METHYLTRANSFERASE YKTD-RELATED"/>
    <property type="match status" value="1"/>
</dbReference>
<dbReference type="PANTHER" id="PTHR43619:SF2">
    <property type="entry name" value="S-ADENOSYL-L-METHIONINE-DEPENDENT METHYLTRANSFERASES SUPERFAMILY PROTEIN"/>
    <property type="match status" value="1"/>
</dbReference>
<dbReference type="Pfam" id="PF04072">
    <property type="entry name" value="LCM"/>
    <property type="match status" value="1"/>
</dbReference>
<dbReference type="SUPFAM" id="SSF53335">
    <property type="entry name" value="S-adenosyl-L-methionine-dependent methyltransferases"/>
    <property type="match status" value="1"/>
</dbReference>
<sequence>MRTHDDTWDIRTSVGATAVMVAAARAVETSKPEPLIRDPYARMLVTNANAGVIWEAMLDQEMVAKVEAIDAETAATVEHMRSYQAVRTNFFDTYFADAVAAGIRQVVILASGLDSRAYRLDWPAGTTVYEIDQPQVLAYKSATLAENGVTPAAERREVAIDLRQDWPSALRAAGFDPSARTAWLAEGLLMYLPAEAQDRLFTQIGELSCAGSRIAAETAGNHADERREQMRERFRKVAQTLGLEQTIDVHELIYHDPDRALLGQWLNEHGWRANAQNACDEMHRVGRWVEGVPMADDKQAYSEFVTAERL</sequence>
<reference key="1">
    <citation type="journal article" date="2008" name="Genome Res.">
        <title>Insights from the complete genome sequence of Mycobacterium marinum on the evolution of Mycobacterium tuberculosis.</title>
        <authorList>
            <person name="Stinear T.P."/>
            <person name="Seemann T."/>
            <person name="Harrison P.F."/>
            <person name="Jenkin G.A."/>
            <person name="Davies J.K."/>
            <person name="Johnson P.D."/>
            <person name="Abdellah Z."/>
            <person name="Arrowsmith C."/>
            <person name="Chillingworth T."/>
            <person name="Churcher C."/>
            <person name="Clarke K."/>
            <person name="Cronin A."/>
            <person name="Davis P."/>
            <person name="Goodhead I."/>
            <person name="Holroyd N."/>
            <person name="Jagels K."/>
            <person name="Lord A."/>
            <person name="Moule S."/>
            <person name="Mungall K."/>
            <person name="Norbertczak H."/>
            <person name="Quail M.A."/>
            <person name="Rabbinowitsch E."/>
            <person name="Walker D."/>
            <person name="White B."/>
            <person name="Whitehead S."/>
            <person name="Small P.L."/>
            <person name="Brosch R."/>
            <person name="Ramakrishnan L."/>
            <person name="Fischbach M.A."/>
            <person name="Parkhill J."/>
            <person name="Cole S.T."/>
        </authorList>
    </citation>
    <scope>NUCLEOTIDE SEQUENCE [LARGE SCALE GENOMIC DNA]</scope>
    <source>
        <strain>ATCC BAA-535 / M</strain>
    </source>
</reference>